<keyword id="KW-0687">Ribonucleoprotein</keyword>
<keyword id="KW-0689">Ribosomal protein</keyword>
<keyword id="KW-0694">RNA-binding</keyword>
<keyword id="KW-0699">rRNA-binding</keyword>
<comment type="function">
    <text evidence="1">With S4 and S12 plays an important role in translational accuracy.</text>
</comment>
<comment type="subunit">
    <text evidence="1">Part of the 30S ribosomal subunit. Contacts protein S4.</text>
</comment>
<comment type="domain">
    <text>The N-terminal domain interacts with the head of the 30S subunit; the C-terminal domain interacts with the body and contacts protein S4. The interaction surface between S4 and S5 is involved in control of translational fidelity.</text>
</comment>
<comment type="similarity">
    <text evidence="1">Belongs to the universal ribosomal protein uS5 family.</text>
</comment>
<gene>
    <name evidence="1" type="primary">rps5</name>
    <name type="ordered locus">TV0349</name>
    <name type="ORF">TVG0342708</name>
</gene>
<protein>
    <recommendedName>
        <fullName evidence="1">Small ribosomal subunit protein uS5</fullName>
    </recommendedName>
    <alternativeName>
        <fullName evidence="2">30S ribosomal protein S5</fullName>
    </alternativeName>
</protein>
<reference key="1">
    <citation type="journal article" date="2000" name="Proc. Natl. Acad. Sci. U.S.A.">
        <title>Archaeal adaptation to higher temperatures revealed by genomic sequence of Thermoplasma volcanium.</title>
        <authorList>
            <person name="Kawashima T."/>
            <person name="Amano N."/>
            <person name="Koike H."/>
            <person name="Makino S."/>
            <person name="Higuchi S."/>
            <person name="Kawashima-Ohya Y."/>
            <person name="Watanabe K."/>
            <person name="Yamazaki M."/>
            <person name="Kanehori K."/>
            <person name="Kawamoto T."/>
            <person name="Nunoshiba T."/>
            <person name="Yamamoto Y."/>
            <person name="Aramaki H."/>
            <person name="Makino K."/>
            <person name="Suzuki M."/>
        </authorList>
    </citation>
    <scope>NUCLEOTIDE SEQUENCE [LARGE SCALE GENOMIC DNA]</scope>
    <source>
        <strain>ATCC 51530 / DSM 4299 / JCM 9571 / NBRC 15438 / GSS1</strain>
    </source>
</reference>
<dbReference type="EMBL" id="BA000011">
    <property type="protein sequence ID" value="BAB59491.1"/>
    <property type="molecule type" value="Genomic_DNA"/>
</dbReference>
<dbReference type="RefSeq" id="WP_010916603.1">
    <property type="nucleotide sequence ID" value="NC_002689.2"/>
</dbReference>
<dbReference type="SMR" id="Q97BV6"/>
<dbReference type="STRING" id="273116.gene:9381126"/>
<dbReference type="PaxDb" id="273116-14324564"/>
<dbReference type="GeneID" id="1440861"/>
<dbReference type="KEGG" id="tvo:TVG0342708"/>
<dbReference type="eggNOG" id="arCOG04087">
    <property type="taxonomic scope" value="Archaea"/>
</dbReference>
<dbReference type="HOGENOM" id="CLU_065898_0_1_2"/>
<dbReference type="OrthoDB" id="38155at2157"/>
<dbReference type="PhylomeDB" id="Q97BV6"/>
<dbReference type="Proteomes" id="UP000001017">
    <property type="component" value="Chromosome"/>
</dbReference>
<dbReference type="GO" id="GO:0022627">
    <property type="term" value="C:cytosolic small ribosomal subunit"/>
    <property type="evidence" value="ECO:0007669"/>
    <property type="project" value="TreeGrafter"/>
</dbReference>
<dbReference type="GO" id="GO:0019843">
    <property type="term" value="F:rRNA binding"/>
    <property type="evidence" value="ECO:0007669"/>
    <property type="project" value="UniProtKB-UniRule"/>
</dbReference>
<dbReference type="GO" id="GO:0003735">
    <property type="term" value="F:structural constituent of ribosome"/>
    <property type="evidence" value="ECO:0007669"/>
    <property type="project" value="InterPro"/>
</dbReference>
<dbReference type="GO" id="GO:0006412">
    <property type="term" value="P:translation"/>
    <property type="evidence" value="ECO:0007669"/>
    <property type="project" value="UniProtKB-UniRule"/>
</dbReference>
<dbReference type="FunFam" id="3.30.160.20:FF:000002">
    <property type="entry name" value="40S ribosomal protein S2"/>
    <property type="match status" value="1"/>
</dbReference>
<dbReference type="FunFam" id="3.30.230.10:FF:000004">
    <property type="entry name" value="40S ribosomal protein S2"/>
    <property type="match status" value="1"/>
</dbReference>
<dbReference type="Gene3D" id="3.30.160.20">
    <property type="match status" value="1"/>
</dbReference>
<dbReference type="Gene3D" id="3.30.230.10">
    <property type="match status" value="1"/>
</dbReference>
<dbReference type="HAMAP" id="MF_01307_A">
    <property type="entry name" value="Ribosomal_uS5_A"/>
    <property type="match status" value="1"/>
</dbReference>
<dbReference type="InterPro" id="IPR020568">
    <property type="entry name" value="Ribosomal_Su5_D2-typ_SF"/>
</dbReference>
<dbReference type="InterPro" id="IPR000851">
    <property type="entry name" value="Ribosomal_uS5"/>
</dbReference>
<dbReference type="InterPro" id="IPR047866">
    <property type="entry name" value="Ribosomal_uS5_arc"/>
</dbReference>
<dbReference type="InterPro" id="IPR005324">
    <property type="entry name" value="Ribosomal_uS5_C"/>
</dbReference>
<dbReference type="InterPro" id="IPR005711">
    <property type="entry name" value="Ribosomal_uS5_euk/arc"/>
</dbReference>
<dbReference type="InterPro" id="IPR013810">
    <property type="entry name" value="Ribosomal_uS5_N"/>
</dbReference>
<dbReference type="InterPro" id="IPR018192">
    <property type="entry name" value="Ribosomal_uS5_N_CS"/>
</dbReference>
<dbReference type="InterPro" id="IPR014721">
    <property type="entry name" value="Ribsml_uS5_D2-typ_fold_subgr"/>
</dbReference>
<dbReference type="NCBIfam" id="NF003125">
    <property type="entry name" value="PRK04044.1"/>
    <property type="match status" value="1"/>
</dbReference>
<dbReference type="NCBIfam" id="TIGR01020">
    <property type="entry name" value="uS5_euk_arch"/>
    <property type="match status" value="1"/>
</dbReference>
<dbReference type="PANTHER" id="PTHR13718:SF4">
    <property type="entry name" value="40S RIBOSOMAL PROTEIN S2"/>
    <property type="match status" value="1"/>
</dbReference>
<dbReference type="PANTHER" id="PTHR13718">
    <property type="entry name" value="RIBOSOMAL S SUBUNIT"/>
    <property type="match status" value="1"/>
</dbReference>
<dbReference type="Pfam" id="PF00333">
    <property type="entry name" value="Ribosomal_S5"/>
    <property type="match status" value="1"/>
</dbReference>
<dbReference type="Pfam" id="PF03719">
    <property type="entry name" value="Ribosomal_S5_C"/>
    <property type="match status" value="1"/>
</dbReference>
<dbReference type="SUPFAM" id="SSF54768">
    <property type="entry name" value="dsRNA-binding domain-like"/>
    <property type="match status" value="1"/>
</dbReference>
<dbReference type="SUPFAM" id="SSF54211">
    <property type="entry name" value="Ribosomal protein S5 domain 2-like"/>
    <property type="match status" value="1"/>
</dbReference>
<dbReference type="PROSITE" id="PS00585">
    <property type="entry name" value="RIBOSOMAL_S5"/>
    <property type="match status" value="1"/>
</dbReference>
<dbReference type="PROSITE" id="PS50881">
    <property type="entry name" value="S5_DSRBD"/>
    <property type="match status" value="1"/>
</dbReference>
<feature type="chain" id="PRO_0000131664" description="Small ribosomal subunit protein uS5">
    <location>
        <begin position="1"/>
        <end position="221"/>
    </location>
</feature>
<feature type="domain" description="S5 DRBM" evidence="1">
    <location>
        <begin position="46"/>
        <end position="109"/>
    </location>
</feature>
<proteinExistence type="inferred from homology"/>
<name>RS5_THEVO</name>
<sequence length="221" mass="23864">MSDEWTPRTQLGKLVASGQIKTISEALKTKLPLKEYEIVDYLLPNIKDEVIDIKRAQRMTDSGRRMTYSITVVVGNEDGYIGLGIGRSKEAAPAIRKALINAKLNIMEIRRGCGSWECGCGRAHTLPFLVEGKSGSVRITLKPAPRGVGLAVGNVAKIILRMAGIEDAWGFAAGHTKTTVNYALAVYNALKETAKVRINPGIVLSTPIYSGSVINVSGHTD</sequence>
<evidence type="ECO:0000255" key="1">
    <source>
        <dbReference type="HAMAP-Rule" id="MF_01307"/>
    </source>
</evidence>
<evidence type="ECO:0000305" key="2"/>
<organism>
    <name type="scientific">Thermoplasma volcanium (strain ATCC 51530 / DSM 4299 / JCM 9571 / NBRC 15438 / GSS1)</name>
    <dbReference type="NCBI Taxonomy" id="273116"/>
    <lineage>
        <taxon>Archaea</taxon>
        <taxon>Methanobacteriati</taxon>
        <taxon>Thermoplasmatota</taxon>
        <taxon>Thermoplasmata</taxon>
        <taxon>Thermoplasmatales</taxon>
        <taxon>Thermoplasmataceae</taxon>
        <taxon>Thermoplasma</taxon>
    </lineage>
</organism>
<accession>Q97BV6</accession>